<proteinExistence type="evidence at protein level"/>
<dbReference type="PIR" id="B60940">
    <property type="entry name" value="B60940"/>
</dbReference>
<dbReference type="RefSeq" id="NP_001183977.1">
    <property type="nucleotide sequence ID" value="NM_001197048.1"/>
</dbReference>
<dbReference type="SMR" id="P56595"/>
<dbReference type="STRING" id="9615.ENSCAFP00000032584"/>
<dbReference type="PaxDb" id="9612-ENSCAFP00000032584"/>
<dbReference type="Ensembl" id="ENSCAFT00000007431.5">
    <property type="protein sequence ID" value="ENSCAFP00000006887.3"/>
    <property type="gene ID" value="ENSCAFG00000004615.6"/>
</dbReference>
<dbReference type="Ensembl" id="ENSCAFT00030003392.1">
    <property type="protein sequence ID" value="ENSCAFP00030003005.1"/>
    <property type="gene ID" value="ENSCAFG00030001852.1"/>
</dbReference>
<dbReference type="Ensembl" id="ENSCAFT00040021279.1">
    <property type="protein sequence ID" value="ENSCAFP00040018477.1"/>
    <property type="gene ID" value="ENSCAFG00040011515.1"/>
</dbReference>
<dbReference type="Ensembl" id="ENSCAFT00845011823.1">
    <property type="protein sequence ID" value="ENSCAFP00845009224.1"/>
    <property type="gene ID" value="ENSCAFG00845006666.1"/>
</dbReference>
<dbReference type="GeneID" id="476437"/>
<dbReference type="KEGG" id="cfa:476437"/>
<dbReference type="CTD" id="341"/>
<dbReference type="VEuPathDB" id="HostDB:ENSCAFG00845006666"/>
<dbReference type="VGNC" id="VGNC:37999">
    <property type="gene designation" value="APOC1"/>
</dbReference>
<dbReference type="eggNOG" id="ENOG502SEU4">
    <property type="taxonomic scope" value="Eukaryota"/>
</dbReference>
<dbReference type="GeneTree" id="ENSGT00390000011584"/>
<dbReference type="HOGENOM" id="CLU_160094_1_0_1"/>
<dbReference type="InParanoid" id="P56595"/>
<dbReference type="OMA" id="GTSTRNW"/>
<dbReference type="OrthoDB" id="8941712at2759"/>
<dbReference type="TreeFam" id="TF330940"/>
<dbReference type="Reactome" id="R-CFA-8866423">
    <property type="pathway name" value="VLDL assembly"/>
</dbReference>
<dbReference type="Reactome" id="R-CFA-8964046">
    <property type="pathway name" value="VLDL clearance"/>
</dbReference>
<dbReference type="Proteomes" id="UP000002254">
    <property type="component" value="Chromosome 1"/>
</dbReference>
<dbReference type="Proteomes" id="UP000694429">
    <property type="component" value="Chromosome 1"/>
</dbReference>
<dbReference type="Proteomes" id="UP000694542">
    <property type="component" value="Chromosome 1"/>
</dbReference>
<dbReference type="Proteomes" id="UP000805418">
    <property type="component" value="Chromosome 1"/>
</dbReference>
<dbReference type="Bgee" id="ENSCAFG00000004615">
    <property type="expression patterns" value="Expressed in adrenal cortex and 46 other cell types or tissues"/>
</dbReference>
<dbReference type="GO" id="GO:0034364">
    <property type="term" value="C:high-density lipoprotein particle"/>
    <property type="evidence" value="ECO:0000318"/>
    <property type="project" value="GO_Central"/>
</dbReference>
<dbReference type="GO" id="GO:0034361">
    <property type="term" value="C:very-low-density lipoprotein particle"/>
    <property type="evidence" value="ECO:0000318"/>
    <property type="project" value="GO_Central"/>
</dbReference>
<dbReference type="GO" id="GO:0005504">
    <property type="term" value="F:fatty acid binding"/>
    <property type="evidence" value="ECO:0000318"/>
    <property type="project" value="GO_Central"/>
</dbReference>
<dbReference type="GO" id="GO:0004859">
    <property type="term" value="F:phospholipase inhibitor activity"/>
    <property type="evidence" value="ECO:0000318"/>
    <property type="project" value="GO_Central"/>
</dbReference>
<dbReference type="GO" id="GO:0006869">
    <property type="term" value="P:lipid transport"/>
    <property type="evidence" value="ECO:0007669"/>
    <property type="project" value="UniProtKB-KW"/>
</dbReference>
<dbReference type="GO" id="GO:0042157">
    <property type="term" value="P:lipoprotein metabolic process"/>
    <property type="evidence" value="ECO:0007669"/>
    <property type="project" value="InterPro"/>
</dbReference>
<dbReference type="GO" id="GO:0032375">
    <property type="term" value="P:negative regulation of cholesterol transport"/>
    <property type="evidence" value="ECO:0000318"/>
    <property type="project" value="GO_Central"/>
</dbReference>
<dbReference type="GO" id="GO:0050995">
    <property type="term" value="P:negative regulation of lipid catabolic process"/>
    <property type="evidence" value="ECO:0000318"/>
    <property type="project" value="GO_Central"/>
</dbReference>
<dbReference type="GO" id="GO:0010916">
    <property type="term" value="P:negative regulation of very-low-density lipoprotein particle clearance"/>
    <property type="evidence" value="ECO:0000318"/>
    <property type="project" value="GO_Central"/>
</dbReference>
<dbReference type="GO" id="GO:0006641">
    <property type="term" value="P:triglyceride metabolic process"/>
    <property type="evidence" value="ECO:0000318"/>
    <property type="project" value="GO_Central"/>
</dbReference>
<dbReference type="GO" id="GO:0034447">
    <property type="term" value="P:very-low-density lipoprotein particle clearance"/>
    <property type="evidence" value="ECO:0000318"/>
    <property type="project" value="GO_Central"/>
</dbReference>
<dbReference type="Gene3D" id="4.10.260.30">
    <property type="entry name" value="Apolipoprotein C-I"/>
    <property type="match status" value="1"/>
</dbReference>
<dbReference type="InterPro" id="IPR043081">
    <property type="entry name" value="ApoC-1_sf"/>
</dbReference>
<dbReference type="InterPro" id="IPR006781">
    <property type="entry name" value="ApoC-I"/>
</dbReference>
<dbReference type="PANTHER" id="PTHR16565">
    <property type="entry name" value="APOLIPOPROTEIN C-I"/>
    <property type="match status" value="1"/>
</dbReference>
<dbReference type="PANTHER" id="PTHR16565:SF2">
    <property type="entry name" value="APOLIPOPROTEIN C-I"/>
    <property type="match status" value="1"/>
</dbReference>
<dbReference type="Pfam" id="PF04691">
    <property type="entry name" value="ApoC-I"/>
    <property type="match status" value="1"/>
</dbReference>
<reference key="1">
    <citation type="journal article" date="1989" name="J. Lipid Res.">
        <title>Structure and expression of dog apolipoprotein A-I, E, and C-I mRNAs: implications for the evolution and functional constraints of apolipoprotein structure.</title>
        <authorList>
            <person name="Luo C.-C."/>
            <person name="Li W.-H."/>
            <person name="Chan L."/>
        </authorList>
    </citation>
    <scope>NUCLEOTIDE SEQUENCE [MRNA]</scope>
    <scope>TISSUE SPECIFICITY</scope>
    <source>
        <tissue>Liver</tissue>
    </source>
</reference>
<reference key="2">
    <citation type="journal article" date="2008" name="Comp. Biochem. Physiol.">
        <title>Mass spectral analysis of the apolipoproteins on dog (Canis lupus familiaris) high density lipoproteins. Detection of apolipoprotein A-II.</title>
        <authorList>
            <person name="Puppione D.L."/>
            <person name="Bassilian S."/>
            <person name="Souda P."/>
            <person name="MacDonald M.H."/>
            <person name="Halgand F."/>
            <person name="Hagland F."/>
            <person name="Whitelegge J.P."/>
        </authorList>
    </citation>
    <scope>PROTEIN SEQUENCE OF 27-88</scope>
    <scope>MASS SPECTROMETRY</scope>
    <source>
        <tissue>Plasma</tissue>
    </source>
</reference>
<sequence>MRLILSLPVLVVVLSMVLEGPAPAQAAGEISSTFERIPDKLKEFGNTLEDKARAAIESIKKSDIPAKTRNWFSEAFKKVKEHLKTAFS</sequence>
<name>APOC1_CANLF</name>
<keyword id="KW-0903">Direct protein sequencing</keyword>
<keyword id="KW-0445">Lipid transport</keyword>
<keyword id="KW-1185">Reference proteome</keyword>
<keyword id="KW-0964">Secreted</keyword>
<keyword id="KW-0732">Signal</keyword>
<keyword id="KW-0813">Transport</keyword>
<keyword id="KW-0850">VLDL</keyword>
<protein>
    <recommendedName>
        <fullName>Apolipoprotein C-I</fullName>
        <shortName>Apo-CI</shortName>
        <shortName>ApoC-I</shortName>
    </recommendedName>
    <alternativeName>
        <fullName>Apolipoprotein C1</fullName>
    </alternativeName>
    <component>
        <recommendedName>
            <fullName>Truncated apolipoprotein C-I</fullName>
        </recommendedName>
    </component>
</protein>
<organism>
    <name type="scientific">Canis lupus familiaris</name>
    <name type="common">Dog</name>
    <name type="synonym">Canis familiaris</name>
    <dbReference type="NCBI Taxonomy" id="9615"/>
    <lineage>
        <taxon>Eukaryota</taxon>
        <taxon>Metazoa</taxon>
        <taxon>Chordata</taxon>
        <taxon>Craniata</taxon>
        <taxon>Vertebrata</taxon>
        <taxon>Euteleostomi</taxon>
        <taxon>Mammalia</taxon>
        <taxon>Eutheria</taxon>
        <taxon>Laurasiatheria</taxon>
        <taxon>Carnivora</taxon>
        <taxon>Caniformia</taxon>
        <taxon>Canidae</taxon>
        <taxon>Canis</taxon>
    </lineage>
</organism>
<evidence type="ECO:0000250" key="1">
    <source>
        <dbReference type="UniProtKB" id="P02654"/>
    </source>
</evidence>
<evidence type="ECO:0000250" key="2">
    <source>
        <dbReference type="UniProtKB" id="P33047"/>
    </source>
</evidence>
<evidence type="ECO:0000250" key="3">
    <source>
        <dbReference type="UniProtKB" id="P86336"/>
    </source>
</evidence>
<evidence type="ECO:0000269" key="4">
    <source>
    </source>
</evidence>
<evidence type="ECO:0000269" key="5">
    <source>
    </source>
</evidence>
<evidence type="ECO:0000305" key="6"/>
<feature type="signal peptide" evidence="4">
    <location>
        <begin position="1"/>
        <end position="26"/>
    </location>
</feature>
<feature type="chain" id="PRO_0000002013" description="Apolipoprotein C-I">
    <location>
        <begin position="27"/>
        <end position="88"/>
    </location>
</feature>
<feature type="chain" id="PRO_0000391842" description="Truncated apolipoprotein C-I" evidence="3">
    <location>
        <begin position="29"/>
        <end position="88"/>
    </location>
</feature>
<accession>P56595</accession>
<gene>
    <name type="primary">APOC1</name>
</gene>
<comment type="function">
    <text evidence="1 2">Inhibitor of lipoprotein binding to the low density lipoprotein (LDL) receptor, LDL receptor-related protein, and very low density lipoprotein (VLDL) receptor. Associates with high density lipoproteins (HDL) and the triacylglycerol-rich lipoproteins in the plasma and makes up about 10% of the protein of the VLDL and 2% of that of HDL. Appears to interfere directly with fatty acid uptake and is also the major plasma inhibitor of cholesteryl ester transfer protein (CETP). Binds free fatty acids and reduces their intracellular esterification. Modulates the interaction of APOE with beta-migrating VLDL and inhibits binding of beta-VLDL to the LDL receptor-related protein.</text>
</comment>
<comment type="subcellular location">
    <subcellularLocation>
        <location evidence="1">Secreted</location>
    </subcellularLocation>
</comment>
<comment type="tissue specificity">
    <text evidence="5">Expressed in the liver.</text>
</comment>
<comment type="mass spectrometry">
    <molecule>Apolipoprotein C-I</molecule>
</comment>
<comment type="similarity">
    <text evidence="6">Belongs to the apolipoprotein C1 family.</text>
</comment>